<organismHost>
    <name type="scientific">Bos taurus</name>
    <name type="common">Bovine</name>
    <dbReference type="NCBI Taxonomy" id="9913"/>
</organismHost>
<organismHost>
    <name type="scientific">Culicoides brevitarsis</name>
    <dbReference type="NCBI Taxonomy" id="469753"/>
</organismHost>
<name>GLYCO_TIBVC</name>
<accession>D8V075</accession>
<comment type="function">
    <text evidence="2">Attaches the virus to host receptors, inducing clathrin-dependent endocytosis of the virion.</text>
</comment>
<comment type="function">
    <text evidence="2">In the endosome, the acidic pH induces conformational changes in the glycoprotein trimer, which trigger fusion between virus and endosomal membrane.</text>
</comment>
<comment type="subunit">
    <text evidence="2">Homotrimer.</text>
</comment>
<comment type="subcellular location">
    <subcellularLocation>
        <location evidence="2">Virion membrane</location>
        <topology evidence="2">Single-pass type I membrane protein</topology>
    </subcellularLocation>
    <subcellularLocation>
        <location evidence="2">Host membrane</location>
        <topology evidence="2">Single-pass type I membrane protein</topology>
    </subcellularLocation>
</comment>
<comment type="alternative products">
    <event type="alternative initiation"/>
    <isoform>
        <id>D8V075-1</id>
        <name>Glycoprotein</name>
        <sequence type="displayed"/>
    </isoform>
    <isoform>
        <id>D8V076-1</id>
        <name>Uncharacterized protein U4</name>
        <sequence type="external"/>
    </isoform>
</comment>
<comment type="PTM">
    <text evidence="2">Glycosylated by host.</text>
</comment>
<comment type="similarity">
    <text evidence="4">Belongs to the vesiculovirus glycoprotein family.</text>
</comment>
<gene>
    <name type="primary">G</name>
</gene>
<evidence type="ECO:0000250" key="1"/>
<evidence type="ECO:0000250" key="2">
    <source>
        <dbReference type="UniProtKB" id="P03522"/>
    </source>
</evidence>
<evidence type="ECO:0000255" key="3"/>
<evidence type="ECO:0000305" key="4"/>
<proteinExistence type="inferred from homology"/>
<feature type="signal peptide" evidence="3">
    <location>
        <begin position="1"/>
        <end position="16"/>
    </location>
</feature>
<feature type="chain" id="PRO_0000432050" description="Glycoprotein" evidence="3">
    <location>
        <begin position="17"/>
        <end position="662"/>
    </location>
</feature>
<feature type="topological domain" description="Virion surface" evidence="3">
    <location>
        <begin position="17"/>
        <end position="579"/>
    </location>
</feature>
<feature type="transmembrane region" description="Helical" evidence="3">
    <location>
        <begin position="580"/>
        <end position="605"/>
    </location>
</feature>
<feature type="topological domain" description="Intravirion" evidence="3">
    <location>
        <begin position="606"/>
        <end position="662"/>
    </location>
</feature>
<feature type="disulfide bond" evidence="1">
    <location>
        <begin position="46"/>
        <end position="338"/>
    </location>
</feature>
<feature type="disulfide bond" evidence="1">
    <location>
        <begin position="82"/>
        <end position="115"/>
    </location>
</feature>
<feature type="disulfide bond" evidence="1">
    <location>
        <begin position="91"/>
        <end position="137"/>
    </location>
</feature>
<feature type="disulfide bond" evidence="1">
    <location>
        <begin position="202"/>
        <end position="259"/>
    </location>
</feature>
<protein>
    <recommendedName>
        <fullName>Glycoprotein</fullName>
    </recommendedName>
</protein>
<reference key="1">
    <citation type="journal article" date="2011" name="J. Gen. Virol.">
        <title>Tibrogargan and Coastal Plains rhabdoviruses: genomic characterization, evolution of novel genes and seroprevalence in Australian livestock.</title>
        <authorList>
            <person name="Gubala A."/>
            <person name="Davis S."/>
            <person name="Weir R."/>
            <person name="Melville L."/>
            <person name="Cowled C."/>
            <person name="Boyle D."/>
        </authorList>
    </citation>
    <scope>NUCLEOTIDE SEQUENCE [GENOMIC RNA]</scope>
    <source>
        <strain>CS132</strain>
    </source>
</reference>
<dbReference type="EMBL" id="GQ294472">
    <property type="protein sequence ID" value="ADG86352.1"/>
    <property type="molecule type" value="Viral_cRNA"/>
</dbReference>
<dbReference type="RefSeq" id="YP_007641373.1">
    <property type="nucleotide sequence ID" value="NC_020804.1"/>
</dbReference>
<dbReference type="GeneID" id="14857903"/>
<dbReference type="KEGG" id="vg:14857903"/>
<dbReference type="Proteomes" id="UP000029770">
    <property type="component" value="Segment"/>
</dbReference>
<dbReference type="GO" id="GO:0033644">
    <property type="term" value="C:host cell membrane"/>
    <property type="evidence" value="ECO:0007669"/>
    <property type="project" value="UniProtKB-SubCell"/>
</dbReference>
<dbReference type="GO" id="GO:0016020">
    <property type="term" value="C:membrane"/>
    <property type="evidence" value="ECO:0007669"/>
    <property type="project" value="UniProtKB-KW"/>
</dbReference>
<dbReference type="GO" id="GO:0019031">
    <property type="term" value="C:viral envelope"/>
    <property type="evidence" value="ECO:0007669"/>
    <property type="project" value="UniProtKB-KW"/>
</dbReference>
<dbReference type="GO" id="GO:0055036">
    <property type="term" value="C:virion membrane"/>
    <property type="evidence" value="ECO:0007669"/>
    <property type="project" value="UniProtKB-SubCell"/>
</dbReference>
<dbReference type="GO" id="GO:0075512">
    <property type="term" value="P:clathrin-dependent endocytosis of virus by host cell"/>
    <property type="evidence" value="ECO:0007669"/>
    <property type="project" value="UniProtKB-KW"/>
</dbReference>
<dbReference type="GO" id="GO:0039654">
    <property type="term" value="P:fusion of virus membrane with host endosome membrane"/>
    <property type="evidence" value="ECO:0007669"/>
    <property type="project" value="UniProtKB-KW"/>
</dbReference>
<dbReference type="GO" id="GO:0019062">
    <property type="term" value="P:virion attachment to host cell"/>
    <property type="evidence" value="ECO:0007669"/>
    <property type="project" value="UniProtKB-KW"/>
</dbReference>
<dbReference type="Gene3D" id="2.30.29.130">
    <property type="match status" value="1"/>
</dbReference>
<dbReference type="InterPro" id="IPR055447">
    <property type="entry name" value="Rhabdo_glycop_CD"/>
</dbReference>
<dbReference type="InterPro" id="IPR001903">
    <property type="entry name" value="Rhabdo_glycop_FD"/>
</dbReference>
<dbReference type="Pfam" id="PF24833">
    <property type="entry name" value="Rhabdo_glycop_CD"/>
    <property type="match status" value="1"/>
</dbReference>
<dbReference type="Pfam" id="PF00974">
    <property type="entry name" value="Rhabdo_glycop_FD"/>
    <property type="match status" value="1"/>
</dbReference>
<dbReference type="SUPFAM" id="SSF161008">
    <property type="entry name" value="Viral glycoprotein ectodomain-like"/>
    <property type="match status" value="1"/>
</dbReference>
<sequence>MEAITIEIIIIILTISYPILVAPQLLYNYPFNCKKGPKMTLDGLTCPLDFNTFNLDSKDNMEAGTMCRPNPLSKDIEDGFLCYKDTWVTTCEETWYFSKTVKNHIIHEHITKDECFEALATYKLGKHVEPFFPAPSCYWSATNEERATFVNIQPHGVLLDPYSGKIKDPLIDSDNCDNDFCVTRSHQTHWLRNRKPDIMERCNNETWECHPIKIYYGWVSKKKNQETSTTFNYVQTGLVIESQYIGHVLMADLCIMTFCNRDGYLFPDGSWWEIKYSLYHAFTKDHTVLNNAHKCGDRTHGDHLTEFQRDKKVGYEDLEINLEGLEMRQKSRSINMMCLNRLAEIRNTHHINVLDMSYLTPKHPGRGLAYYFSQDQKNSSKYHVKVLDCDYKLIHIHDADIKGFVNITKYPEPNVTILGLKDNLTFADLGISRCQDLTPLNGSRNISCEESSGPLHSDDSRLSNGKRFWTRHSFQGANFHEHPGVRIGVNGITYDIRKQILRFPSTSNLLWDLPSYYSTKHRVHFFQHPTKHEIRKNFTGSDSRDIDVLDDLINRHINRTDFPTRIRNWIGNIEDKVEHFFSNVGGTIKTIISLVLFVIGTLISIKVWKKCKRHPQKTKKVAQLKLNDYEKTYNQRDTSNNNNDDLYETIENGGTVYSPFHV</sequence>
<organism>
    <name type="scientific">Tibrogargan virus (strain CS132)</name>
    <name type="common">TIBV</name>
    <dbReference type="NCBI Taxonomy" id="1559361"/>
    <lineage>
        <taxon>Viruses</taxon>
        <taxon>Riboviria</taxon>
        <taxon>Orthornavirae</taxon>
        <taxon>Negarnaviricota</taxon>
        <taxon>Haploviricotina</taxon>
        <taxon>Monjiviricetes</taxon>
        <taxon>Mononegavirales</taxon>
        <taxon>Rhabdoviridae</taxon>
        <taxon>Alpharhabdovirinae</taxon>
        <taxon>Tibrovirus</taxon>
        <taxon>Tibrovirus tibrogargan</taxon>
    </lineage>
</organism>
<keyword id="KW-0024">Alternative initiation</keyword>
<keyword id="KW-1165">Clathrin-mediated endocytosis of virus by host</keyword>
<keyword id="KW-1015">Disulfide bond</keyword>
<keyword id="KW-1170">Fusion of virus membrane with host endosomal membrane</keyword>
<keyword id="KW-1168">Fusion of virus membrane with host membrane</keyword>
<keyword id="KW-0325">Glycoprotein</keyword>
<keyword id="KW-1043">Host membrane</keyword>
<keyword id="KW-0945">Host-virus interaction</keyword>
<keyword id="KW-0449">Lipoprotein</keyword>
<keyword id="KW-0472">Membrane</keyword>
<keyword id="KW-0564">Palmitate</keyword>
<keyword id="KW-1185">Reference proteome</keyword>
<keyword id="KW-0732">Signal</keyword>
<keyword id="KW-0812">Transmembrane</keyword>
<keyword id="KW-1133">Transmembrane helix</keyword>
<keyword id="KW-1161">Viral attachment to host cell</keyword>
<keyword id="KW-0261">Viral envelope protein</keyword>
<keyword id="KW-1162">Viral penetration into host cytoplasm</keyword>
<keyword id="KW-0946">Virion</keyword>
<keyword id="KW-1164">Virus endocytosis by host</keyword>
<keyword id="KW-1160">Virus entry into host cell</keyword>